<gene>
    <name type="primary">Cdc20</name>
</gene>
<comment type="function">
    <text evidence="2 3">Substrate-specific adapter of the anaphase promoting complex/cyclosome (APC/C) complex that confers substrate specificity by binding to substrates and targeting them to the APC/C complex for ubiquitination and degradation. Recognizes and binds the destruction box (D box) on protein substrates. Involved in the metaphase/anaphase transition of cell cycle. Is regulated by MAD2L1: in metaphase the MAD2L1-CDC20-APC/C ternary complex is inactive and in anaphase the CDC20-APC/C binary complex is active in degrading substrates (By similarity). The CDC20-APC/C complex positively regulates the formation of synaptic vesicle clustering at active zone to the presynaptic membrane in postmitotic neurons (By similarity). CDC20-APC/C-induced degradation of NEUROD2 induces presynaptic differentiation (By similarity). The CDC20-APC/C complex promotes proper dilation formation and radial migration by degrading CCDC41 (By similarity).</text>
</comment>
<comment type="pathway">
    <text>Protein modification; protein ubiquitination.</text>
</comment>
<comment type="subunit">
    <text evidence="2 3">Component of a complex with CDC20, CDC27, SPATC1 and TUBG1 (By similarity). Interacts with NEUROD2 (By similarity). Interacts with dimeric MAD2L1 in its closed conformation form (By similarity). Interacts with BUB1B (By similarity). The phosphorylated form interacts with APC/C (By similarity). Interacts with NINL (By similarity). May interact with MAD2L2 (By similarity). Interacts with CDK5RAP2 (By similarity). Interacts with SIRT2 (By similarity). Interacts with isoform 1 of NEK2 (By similarity). Interacts with HSF1 (via phosphorylated form); this interaction occurs in mitosis in a MAD2L1-dependent manner and prevents PLK1-stimulated degradation of HSF1 by blocking the recruitment of the SCF(BTRC) ubiquitin ligase complex (By similarity). Interacts (via the N-terminal substrate-binding domain) with FBXO5 (By similarity). Interacts with CCNF (By similarity). Interacts with USP22 (By similarity).</text>
</comment>
<comment type="interaction">
    <interactant intactId="EBI-2256532">
        <id>Q62623</id>
    </interactant>
    <interactant intactId="EBI-301697">
        <id>Q9UBN7</id>
        <label>HDAC6</label>
    </interactant>
    <organismsDiffer>true</organismsDiffer>
    <experiments>2</experiments>
</comment>
<comment type="subcellular location">
    <subcellularLocation>
        <location evidence="2">Cytoplasm</location>
        <location evidence="2">Cytoskeleton</location>
        <location evidence="2">Microtubule organizing center</location>
        <location evidence="2">Centrosome</location>
    </subcellularLocation>
    <subcellularLocation>
        <location evidence="2">Chromosome</location>
        <location evidence="2">Centromere</location>
        <location evidence="2">Kinetochore</location>
    </subcellularLocation>
    <subcellularLocation>
        <location evidence="2">Cytoplasm</location>
        <location evidence="2">Cytoskeleton</location>
        <location evidence="2">Spindle pole</location>
    </subcellularLocation>
</comment>
<comment type="PTM">
    <text evidence="2">Phosphorylated during mitosis (By similarity). Phosphorylated by BUB1 at Ser-41; Ser-72; Ser-92; Ser-153; Thr-157 and Ser-161 (By similarity). Phosphorylated by NEK2 (By similarity).</text>
</comment>
<comment type="PTM">
    <text evidence="1">Dephosphorylated by CTDP1.</text>
</comment>
<comment type="PTM">
    <text evidence="1">Acetylated. Deacetylated at Lys-66 by SIRT2; deacetylation enhances the interaction of CDC20 with CDC27, leading to activation of anaphase promoting complex/cyclosome (APC/C) (By similarity).</text>
</comment>
<comment type="PTM">
    <text evidence="2">Ubiquitinated and degraded by the proteasome during spindle assembly checkpoint (By similarity). Ubiquitinated at Lys-490 during prometaphase. Ubiquitination at Lys-485 and Lys-490 has no effect on its ability to bind the APC/C complex (By similarity). Ubiquitinated by UBR5 when not assembled in a multiprotein complex, leading to its degradation: UBR5 recognizes and binds a degron that is not accessible when CDC20 is part of a complex (By similarity).</text>
</comment>
<comment type="similarity">
    <text evidence="5">Belongs to the WD repeat CDC20/Fizzy family.</text>
</comment>
<organism>
    <name type="scientific">Rattus norvegicus</name>
    <name type="common">Rat</name>
    <dbReference type="NCBI Taxonomy" id="10116"/>
    <lineage>
        <taxon>Eukaryota</taxon>
        <taxon>Metazoa</taxon>
        <taxon>Chordata</taxon>
        <taxon>Craniata</taxon>
        <taxon>Vertebrata</taxon>
        <taxon>Euteleostomi</taxon>
        <taxon>Mammalia</taxon>
        <taxon>Eutheria</taxon>
        <taxon>Euarchontoglires</taxon>
        <taxon>Glires</taxon>
        <taxon>Rodentia</taxon>
        <taxon>Myomorpha</taxon>
        <taxon>Muroidea</taxon>
        <taxon>Muridae</taxon>
        <taxon>Murinae</taxon>
        <taxon>Rattus</taxon>
    </lineage>
</organism>
<proteinExistence type="evidence at protein level"/>
<reference key="1">
    <citation type="journal article" date="1994" name="Mol. Cell. Biol.">
        <title>A novel mammalian protein, p55CDC, present in dividing cells is associated with protein kinase activity and has homology to the Saccharomyces cerevisiae cell division cycle proteins Cdc20 and Cdc4.</title>
        <authorList>
            <person name="Weinstein J."/>
            <person name="Jacobsen F.W."/>
            <person name="Hsu-Chen J."/>
            <person name="Wu T."/>
            <person name="Baum L.G."/>
        </authorList>
    </citation>
    <scope>NUCLEOTIDE SEQUENCE [MRNA]</scope>
    <source>
        <tissue>Spleen</tissue>
    </source>
</reference>
<reference key="2">
    <citation type="journal article" date="1998" name="Mol. Genet. Metab.">
        <title>Genomic organization, 5' flanking enhancer region, and chromosomal assignment of the cell cycle gene, p55Cdc.</title>
        <authorList>
            <person name="Weinstein J."/>
            <person name="Karim J."/>
            <person name="Geschwind D.H."/>
            <person name="Nelson S.F."/>
            <person name="Krumm J."/>
            <person name="Sakamoto K.M."/>
        </authorList>
    </citation>
    <scope>NUCLEOTIDE SEQUENCE [GENOMIC DNA]</scope>
</reference>
<reference key="3">
    <citation type="journal article" date="2004" name="Genome Res.">
        <title>The status, quality, and expansion of the NIH full-length cDNA project: the Mammalian Gene Collection (MGC).</title>
        <authorList>
            <consortium name="The MGC Project Team"/>
        </authorList>
    </citation>
    <scope>NUCLEOTIDE SEQUENCE [LARGE SCALE MRNA]</scope>
    <source>
        <tissue>Testis</tissue>
    </source>
</reference>
<name>CDC20_RAT</name>
<dbReference type="EMBL" id="U05341">
    <property type="protein sequence ID" value="AAA19018.1"/>
    <property type="molecule type" value="mRNA"/>
</dbReference>
<dbReference type="EMBL" id="AF052695">
    <property type="protein sequence ID" value="AAC14741.1"/>
    <property type="molecule type" value="Genomic_DNA"/>
</dbReference>
<dbReference type="EMBL" id="BC085691">
    <property type="protein sequence ID" value="AAH85691.1"/>
    <property type="molecule type" value="mRNA"/>
</dbReference>
<dbReference type="PIR" id="B56021">
    <property type="entry name" value="B56021"/>
</dbReference>
<dbReference type="RefSeq" id="NP_741990.1">
    <property type="nucleotide sequence ID" value="NM_171993.2"/>
</dbReference>
<dbReference type="SMR" id="Q62623"/>
<dbReference type="BioGRID" id="249100">
    <property type="interactions" value="6"/>
</dbReference>
<dbReference type="FunCoup" id="Q62623">
    <property type="interactions" value="1984"/>
</dbReference>
<dbReference type="IntAct" id="Q62623">
    <property type="interactions" value="3"/>
</dbReference>
<dbReference type="STRING" id="10116.ENSRNOP00000037772"/>
<dbReference type="iPTMnet" id="Q62623"/>
<dbReference type="PhosphoSitePlus" id="Q62623"/>
<dbReference type="PaxDb" id="10116-ENSRNOP00000037772"/>
<dbReference type="GeneID" id="64515"/>
<dbReference type="KEGG" id="rno:64515"/>
<dbReference type="UCSC" id="RGD:620477">
    <property type="organism name" value="rat"/>
</dbReference>
<dbReference type="AGR" id="RGD:620477"/>
<dbReference type="CTD" id="991"/>
<dbReference type="RGD" id="620477">
    <property type="gene designation" value="Cdc20"/>
</dbReference>
<dbReference type="VEuPathDB" id="HostDB:ENSRNOG00000028415"/>
<dbReference type="eggNOG" id="KOG0305">
    <property type="taxonomic scope" value="Eukaryota"/>
</dbReference>
<dbReference type="HOGENOM" id="CLU_014831_6_1_1"/>
<dbReference type="InParanoid" id="Q62623"/>
<dbReference type="OrthoDB" id="10263272at2759"/>
<dbReference type="PhylomeDB" id="Q62623"/>
<dbReference type="Reactome" id="R-RNO-141405">
    <property type="pathway name" value="Inhibition of the proteolytic activity of APC/C required for the onset of anaphase by mitotic spindle checkpoint components"/>
</dbReference>
<dbReference type="Reactome" id="R-RNO-141430">
    <property type="pathway name" value="Inactivation of APC/C via direct inhibition of the APC/C complex"/>
</dbReference>
<dbReference type="Reactome" id="R-RNO-141444">
    <property type="pathway name" value="Amplification of signal from unattached kinetochores via a MAD2 inhibitory signal"/>
</dbReference>
<dbReference type="Reactome" id="R-RNO-174048">
    <property type="pathway name" value="APC/C:Cdc20 mediated degradation of Cyclin B"/>
</dbReference>
<dbReference type="Reactome" id="R-RNO-174113">
    <property type="pathway name" value="SCF-beta-TrCP mediated degradation of Emi1"/>
</dbReference>
<dbReference type="Reactome" id="R-RNO-174154">
    <property type="pathway name" value="APC/C:Cdc20 mediated degradation of Securin"/>
</dbReference>
<dbReference type="Reactome" id="R-RNO-174178">
    <property type="pathway name" value="APC/C:Cdh1 mediated degradation of Cdc20 and other APC/C:Cdh1 targeted proteins in late mitosis/early G1"/>
</dbReference>
<dbReference type="Reactome" id="R-RNO-174184">
    <property type="pathway name" value="Cdc20:Phospho-APC/C mediated degradation of Cyclin A"/>
</dbReference>
<dbReference type="Reactome" id="R-RNO-176407">
    <property type="pathway name" value="Conversion from APC/C:Cdc20 to APC/C:Cdh1 in late anaphase"/>
</dbReference>
<dbReference type="Reactome" id="R-RNO-176408">
    <property type="pathway name" value="Regulation of APC/C activators between G1/S and early anaphase"/>
</dbReference>
<dbReference type="Reactome" id="R-RNO-176417">
    <property type="pathway name" value="Phosphorylation of Emi1"/>
</dbReference>
<dbReference type="Reactome" id="R-RNO-179409">
    <property type="pathway name" value="APC-Cdc20 mediated degradation of Nek2A"/>
</dbReference>
<dbReference type="Reactome" id="R-RNO-2467813">
    <property type="pathway name" value="Separation of Sister Chromatids"/>
</dbReference>
<dbReference type="Reactome" id="R-RNO-2500257">
    <property type="pathway name" value="Resolution of Sister Chromatid Cohesion"/>
</dbReference>
<dbReference type="Reactome" id="R-RNO-5663220">
    <property type="pathway name" value="RHO GTPases Activate Formins"/>
</dbReference>
<dbReference type="Reactome" id="R-RNO-5689880">
    <property type="pathway name" value="Ub-specific processing proteases"/>
</dbReference>
<dbReference type="Reactome" id="R-RNO-68877">
    <property type="pathway name" value="Mitotic Prometaphase"/>
</dbReference>
<dbReference type="Reactome" id="R-RNO-9648025">
    <property type="pathway name" value="EML4 and NUDC in mitotic spindle formation"/>
</dbReference>
<dbReference type="Reactome" id="R-RNO-983168">
    <property type="pathway name" value="Antigen processing: Ubiquitination &amp; Proteasome degradation"/>
</dbReference>
<dbReference type="UniPathway" id="UPA00143"/>
<dbReference type="PRO" id="PR:Q62623"/>
<dbReference type="Proteomes" id="UP000002494">
    <property type="component" value="Chromosome 5"/>
</dbReference>
<dbReference type="Bgee" id="ENSRNOG00000028415">
    <property type="expression patterns" value="Expressed in testis and 19 other cell types or tissues"/>
</dbReference>
<dbReference type="GO" id="GO:0005680">
    <property type="term" value="C:anaphase-promoting complex"/>
    <property type="evidence" value="ECO:0000266"/>
    <property type="project" value="RGD"/>
</dbReference>
<dbReference type="GO" id="GO:0005813">
    <property type="term" value="C:centrosome"/>
    <property type="evidence" value="ECO:0000314"/>
    <property type="project" value="RGD"/>
</dbReference>
<dbReference type="GO" id="GO:0005829">
    <property type="term" value="C:cytosol"/>
    <property type="evidence" value="ECO:0007669"/>
    <property type="project" value="Ensembl"/>
</dbReference>
<dbReference type="GO" id="GO:0000776">
    <property type="term" value="C:kinetochore"/>
    <property type="evidence" value="ECO:0000250"/>
    <property type="project" value="UniProtKB"/>
</dbReference>
<dbReference type="GO" id="GO:0033597">
    <property type="term" value="C:mitotic checkpoint complex"/>
    <property type="evidence" value="ECO:0000266"/>
    <property type="project" value="RGD"/>
</dbReference>
<dbReference type="GO" id="GO:0005654">
    <property type="term" value="C:nucleoplasm"/>
    <property type="evidence" value="ECO:0007669"/>
    <property type="project" value="Ensembl"/>
</dbReference>
<dbReference type="GO" id="GO:0048471">
    <property type="term" value="C:perinuclear region of cytoplasm"/>
    <property type="evidence" value="ECO:0000314"/>
    <property type="project" value="RGD"/>
</dbReference>
<dbReference type="GO" id="GO:0032991">
    <property type="term" value="C:protein-containing complex"/>
    <property type="evidence" value="ECO:0000314"/>
    <property type="project" value="RGD"/>
</dbReference>
<dbReference type="GO" id="GO:0000922">
    <property type="term" value="C:spindle pole"/>
    <property type="evidence" value="ECO:0007669"/>
    <property type="project" value="UniProtKB-SubCell"/>
</dbReference>
<dbReference type="GO" id="GO:0010997">
    <property type="term" value="F:anaphase-promoting complex binding"/>
    <property type="evidence" value="ECO:0000266"/>
    <property type="project" value="RGD"/>
</dbReference>
<dbReference type="GO" id="GO:0042826">
    <property type="term" value="F:histone deacetylase binding"/>
    <property type="evidence" value="ECO:0000353"/>
    <property type="project" value="RGD"/>
</dbReference>
<dbReference type="GO" id="GO:1990757">
    <property type="term" value="F:ubiquitin ligase activator activity"/>
    <property type="evidence" value="ECO:0000318"/>
    <property type="project" value="GO_Central"/>
</dbReference>
<dbReference type="GO" id="GO:1990756">
    <property type="term" value="F:ubiquitin-like ligase-substrate adaptor activity"/>
    <property type="evidence" value="ECO:0000266"/>
    <property type="project" value="RGD"/>
</dbReference>
<dbReference type="GO" id="GO:0031145">
    <property type="term" value="P:anaphase-promoting complex-dependent catabolic process"/>
    <property type="evidence" value="ECO:0000266"/>
    <property type="project" value="RGD"/>
</dbReference>
<dbReference type="GO" id="GO:0051301">
    <property type="term" value="P:cell division"/>
    <property type="evidence" value="ECO:0007669"/>
    <property type="project" value="UniProtKB-KW"/>
</dbReference>
<dbReference type="GO" id="GO:0044784">
    <property type="term" value="P:metaphase/anaphase transition of cell cycle"/>
    <property type="evidence" value="ECO:0000250"/>
    <property type="project" value="UniProtKB"/>
</dbReference>
<dbReference type="GO" id="GO:1990949">
    <property type="term" value="P:metaphase/anaphase transition of meiosis I"/>
    <property type="evidence" value="ECO:0000250"/>
    <property type="project" value="UniProtKB"/>
</dbReference>
<dbReference type="GO" id="GO:0007064">
    <property type="term" value="P:mitotic sister chromatid cohesion"/>
    <property type="evidence" value="ECO:0000266"/>
    <property type="project" value="RGD"/>
</dbReference>
<dbReference type="GO" id="GO:0090307">
    <property type="term" value="P:mitotic spindle assembly"/>
    <property type="evidence" value="ECO:0000266"/>
    <property type="project" value="RGD"/>
</dbReference>
<dbReference type="GO" id="GO:1905786">
    <property type="term" value="P:positive regulation of anaphase-promoting complex-dependent catabolic process"/>
    <property type="evidence" value="ECO:0000318"/>
    <property type="project" value="GO_Central"/>
</dbReference>
<dbReference type="GO" id="GO:0008284">
    <property type="term" value="P:positive regulation of cell population proliferation"/>
    <property type="evidence" value="ECO:0000315"/>
    <property type="project" value="RGD"/>
</dbReference>
<dbReference type="GO" id="GO:1904146">
    <property type="term" value="P:positive regulation of meiotic cell cycle process involved in oocyte maturation"/>
    <property type="evidence" value="ECO:0000266"/>
    <property type="project" value="RGD"/>
</dbReference>
<dbReference type="GO" id="GO:0045842">
    <property type="term" value="P:positive regulation of mitotic metaphase/anaphase transition"/>
    <property type="evidence" value="ECO:0000266"/>
    <property type="project" value="RGD"/>
</dbReference>
<dbReference type="GO" id="GO:0090129">
    <property type="term" value="P:positive regulation of synapse maturation"/>
    <property type="evidence" value="ECO:0000250"/>
    <property type="project" value="UniProtKB"/>
</dbReference>
<dbReference type="GO" id="GO:0031915">
    <property type="term" value="P:positive regulation of synaptic plasticity"/>
    <property type="evidence" value="ECO:0000250"/>
    <property type="project" value="UniProtKB"/>
</dbReference>
<dbReference type="GO" id="GO:1904668">
    <property type="term" value="P:positive regulation of ubiquitin protein ligase activity"/>
    <property type="evidence" value="ECO:0000250"/>
    <property type="project" value="UniProtKB"/>
</dbReference>
<dbReference type="GO" id="GO:0016567">
    <property type="term" value="P:protein ubiquitination"/>
    <property type="evidence" value="ECO:0007669"/>
    <property type="project" value="UniProtKB-UniPathway"/>
</dbReference>
<dbReference type="GO" id="GO:0050773">
    <property type="term" value="P:regulation of dendrite development"/>
    <property type="evidence" value="ECO:0000315"/>
    <property type="project" value="RGD"/>
</dbReference>
<dbReference type="GO" id="GO:0040020">
    <property type="term" value="P:regulation of meiotic nuclear division"/>
    <property type="evidence" value="ECO:0000266"/>
    <property type="project" value="RGD"/>
</dbReference>
<dbReference type="CDD" id="cd00200">
    <property type="entry name" value="WD40"/>
    <property type="match status" value="1"/>
</dbReference>
<dbReference type="FunFam" id="2.130.10.10:FF:000224">
    <property type="entry name" value="cell division cycle protein 20 homolog"/>
    <property type="match status" value="1"/>
</dbReference>
<dbReference type="Gene3D" id="2.130.10.10">
    <property type="entry name" value="YVTN repeat-like/Quinoprotein amine dehydrogenase"/>
    <property type="match status" value="1"/>
</dbReference>
<dbReference type="InterPro" id="IPR033010">
    <property type="entry name" value="Cdc20/Fizzy"/>
</dbReference>
<dbReference type="InterPro" id="IPR015943">
    <property type="entry name" value="WD40/YVTN_repeat-like_dom_sf"/>
</dbReference>
<dbReference type="InterPro" id="IPR056150">
    <property type="entry name" value="WD40_CDC20-Fz"/>
</dbReference>
<dbReference type="InterPro" id="IPR036322">
    <property type="entry name" value="WD40_repeat_dom_sf"/>
</dbReference>
<dbReference type="InterPro" id="IPR001680">
    <property type="entry name" value="WD40_rpt"/>
</dbReference>
<dbReference type="PANTHER" id="PTHR19918">
    <property type="entry name" value="CELL DIVISION CYCLE 20 CDC20 FIZZY -RELATED"/>
    <property type="match status" value="1"/>
</dbReference>
<dbReference type="PANTHER" id="PTHR19918:SF3">
    <property type="entry name" value="CELL DIVISION CYCLE PROTEIN 20 HOMOLOG"/>
    <property type="match status" value="1"/>
</dbReference>
<dbReference type="Pfam" id="PF24807">
    <property type="entry name" value="WD40_CDC20-Fz"/>
    <property type="match status" value="1"/>
</dbReference>
<dbReference type="SMART" id="SM00320">
    <property type="entry name" value="WD40"/>
    <property type="match status" value="7"/>
</dbReference>
<dbReference type="SUPFAM" id="SSF50978">
    <property type="entry name" value="WD40 repeat-like"/>
    <property type="match status" value="1"/>
</dbReference>
<dbReference type="PROSITE" id="PS00678">
    <property type="entry name" value="WD_REPEATS_1"/>
    <property type="match status" value="2"/>
</dbReference>
<dbReference type="PROSITE" id="PS50082">
    <property type="entry name" value="WD_REPEATS_2"/>
    <property type="match status" value="3"/>
</dbReference>
<dbReference type="PROSITE" id="PS50294">
    <property type="entry name" value="WD_REPEATS_REGION"/>
    <property type="match status" value="1"/>
</dbReference>
<keyword id="KW-0007">Acetylation</keyword>
<keyword id="KW-0131">Cell cycle</keyword>
<keyword id="KW-0132">Cell division</keyword>
<keyword id="KW-0137">Centromere</keyword>
<keyword id="KW-0158">Chromosome</keyword>
<keyword id="KW-0963">Cytoplasm</keyword>
<keyword id="KW-0206">Cytoskeleton</keyword>
<keyword id="KW-1017">Isopeptide bond</keyword>
<keyword id="KW-0995">Kinetochore</keyword>
<keyword id="KW-0498">Mitosis</keyword>
<keyword id="KW-0597">Phosphoprotein</keyword>
<keyword id="KW-1185">Reference proteome</keyword>
<keyword id="KW-0677">Repeat</keyword>
<keyword id="KW-0832">Ubl conjugation</keyword>
<keyword id="KW-0833">Ubl conjugation pathway</keyword>
<keyword id="KW-0853">WD repeat</keyword>
<protein>
    <recommendedName>
        <fullName>Cell division cycle protein 20 homolog</fullName>
    </recommendedName>
    <alternativeName>
        <fullName>p55CDC</fullName>
    </alternativeName>
</protein>
<evidence type="ECO:0000250" key="1"/>
<evidence type="ECO:0000250" key="2">
    <source>
        <dbReference type="UniProtKB" id="Q12834"/>
    </source>
</evidence>
<evidence type="ECO:0000250" key="3">
    <source>
        <dbReference type="UniProtKB" id="Q9JJ66"/>
    </source>
</evidence>
<evidence type="ECO:0000256" key="4">
    <source>
        <dbReference type="SAM" id="MobiDB-lite"/>
    </source>
</evidence>
<evidence type="ECO:0000305" key="5"/>
<accession>Q62623</accession>
<accession>O70380</accession>
<accession>Q5U360</accession>
<sequence length="499" mass="54829">MAQFVFESDLHSLLQLDAPIPNAPIARWQRKAKEATGPAPSPMRAANRSHSAGRTPGRTPGKSNSKVQTTPSKPGGDRYIPQRSASQMEVASFLLSKENQPEDGGTPTKKEHQKAWARNLNGFDVEEAKILRLSGKPQNAPEGYQNRLKVLYSQKATPGSSRKACRYIPSLPDRILDAPEIRNDYYLNLVDWSSGNVLAVALDNSVYLWNAGSGDILQLLQMEQPGDYISSVAWIKEGNYLAVGTSNAEVQLWDVQQQKRLRNMTSHSARVSSLSWNSYILSSGSRSGHIHHHDVRVAEHHVATLSGHSQEVCGLRWAPDGRHLASGGNDNIVNVWPSGPGESGWVPLQTFTQHQGAVKAVAWCPWQSNILATGGGTSDRHIRIWNVCSGACLSAVDVHSQVCSILWSPHYKELISGHGFAQNQLVIWKYPTMAKVAELKGHTARVLSLTMSPDGATVASAAADETLRLWRCFELDPALRREREKASTSKSSLIHQGIR</sequence>
<feature type="chain" id="PRO_0000050902" description="Cell division cycle protein 20 homolog">
    <location>
        <begin position="1"/>
        <end position="499"/>
    </location>
</feature>
<feature type="repeat" description="WD 1">
    <location>
        <begin position="182"/>
        <end position="221"/>
    </location>
</feature>
<feature type="repeat" description="WD 2">
    <location>
        <begin position="224"/>
        <end position="263"/>
    </location>
</feature>
<feature type="repeat" description="WD 3">
    <location>
        <begin position="266"/>
        <end position="303"/>
    </location>
</feature>
<feature type="repeat" description="WD 4">
    <location>
        <begin position="307"/>
        <end position="346"/>
    </location>
</feature>
<feature type="repeat" description="WD 5">
    <location>
        <begin position="353"/>
        <end position="395"/>
    </location>
</feature>
<feature type="repeat" description="WD 6">
    <location>
        <begin position="397"/>
        <end position="438"/>
    </location>
</feature>
<feature type="repeat" description="WD 7">
    <location>
        <begin position="441"/>
        <end position="480"/>
    </location>
</feature>
<feature type="region of interest" description="Disordered" evidence="4">
    <location>
        <begin position="27"/>
        <end position="80"/>
    </location>
</feature>
<feature type="compositionally biased region" description="Polar residues" evidence="4">
    <location>
        <begin position="61"/>
        <end position="72"/>
    </location>
</feature>
<feature type="modified residue" description="Phosphoserine" evidence="2">
    <location>
        <position position="41"/>
    </location>
</feature>
<feature type="modified residue" description="N6-acetyllysine" evidence="2">
    <location>
        <position position="66"/>
    </location>
</feature>
<feature type="modified residue" description="Phosphothreonine" evidence="2">
    <location>
        <position position="70"/>
    </location>
</feature>
<feature type="modified residue" description="Phosphoserine" evidence="2">
    <location>
        <position position="72"/>
    </location>
</feature>
<feature type="modified residue" description="Phosphoserine" evidence="2">
    <location>
        <position position="92"/>
    </location>
</feature>
<feature type="modified residue" description="Phosphothreonine" evidence="2">
    <location>
        <position position="106"/>
    </location>
</feature>
<feature type="modified residue" description="Phosphoserine" evidence="2">
    <location>
        <position position="153"/>
    </location>
</feature>
<feature type="modified residue" description="Phosphothreonine" evidence="2">
    <location>
        <position position="157"/>
    </location>
</feature>
<feature type="modified residue" description="Phosphoserine" evidence="2">
    <location>
        <position position="161"/>
    </location>
</feature>
<feature type="cross-link" description="Glycyl lysine isopeptide (Lys-Gly) (interchain with G-Cter in ubiquitin)" evidence="2">
    <location>
        <position position="485"/>
    </location>
</feature>
<feature type="cross-link" description="Glycyl lysine isopeptide (Lys-Gly) (interchain with G-Cter in ubiquitin)" evidence="2">
    <location>
        <position position="490"/>
    </location>
</feature>
<feature type="sequence conflict" description="In Ref. 1; AAA19018." evidence="5" ref="1">
    <original>D</original>
    <variation>E</variation>
    <location>
        <position position="77"/>
    </location>
</feature>